<dbReference type="EC" id="2.4.2.9" evidence="1"/>
<dbReference type="EMBL" id="BA000004">
    <property type="protein sequence ID" value="BAB07483.1"/>
    <property type="molecule type" value="Genomic_DNA"/>
</dbReference>
<dbReference type="PIR" id="D84120">
    <property type="entry name" value="D84120"/>
</dbReference>
<dbReference type="RefSeq" id="WP_010899889.1">
    <property type="nucleotide sequence ID" value="NC_002570.2"/>
</dbReference>
<dbReference type="SMR" id="Q9K6G5"/>
<dbReference type="STRING" id="272558.gene:10729677"/>
<dbReference type="KEGG" id="bha:BH3764"/>
<dbReference type="eggNOG" id="COG0035">
    <property type="taxonomic scope" value="Bacteria"/>
</dbReference>
<dbReference type="HOGENOM" id="CLU_067096_2_2_9"/>
<dbReference type="OrthoDB" id="9781675at2"/>
<dbReference type="UniPathway" id="UPA00574">
    <property type="reaction ID" value="UER00636"/>
</dbReference>
<dbReference type="Proteomes" id="UP000001258">
    <property type="component" value="Chromosome"/>
</dbReference>
<dbReference type="GO" id="GO:0005525">
    <property type="term" value="F:GTP binding"/>
    <property type="evidence" value="ECO:0007669"/>
    <property type="project" value="UniProtKB-KW"/>
</dbReference>
<dbReference type="GO" id="GO:0000287">
    <property type="term" value="F:magnesium ion binding"/>
    <property type="evidence" value="ECO:0007669"/>
    <property type="project" value="UniProtKB-UniRule"/>
</dbReference>
<dbReference type="GO" id="GO:0004845">
    <property type="term" value="F:uracil phosphoribosyltransferase activity"/>
    <property type="evidence" value="ECO:0007669"/>
    <property type="project" value="UniProtKB-UniRule"/>
</dbReference>
<dbReference type="GO" id="GO:0044206">
    <property type="term" value="P:UMP salvage"/>
    <property type="evidence" value="ECO:0007669"/>
    <property type="project" value="UniProtKB-UniRule"/>
</dbReference>
<dbReference type="GO" id="GO:0006223">
    <property type="term" value="P:uracil salvage"/>
    <property type="evidence" value="ECO:0007669"/>
    <property type="project" value="InterPro"/>
</dbReference>
<dbReference type="CDD" id="cd06223">
    <property type="entry name" value="PRTases_typeI"/>
    <property type="match status" value="1"/>
</dbReference>
<dbReference type="FunFam" id="3.40.50.2020:FF:000003">
    <property type="entry name" value="Uracil phosphoribosyltransferase"/>
    <property type="match status" value="1"/>
</dbReference>
<dbReference type="Gene3D" id="3.40.50.2020">
    <property type="match status" value="1"/>
</dbReference>
<dbReference type="HAMAP" id="MF_01218_B">
    <property type="entry name" value="Upp_B"/>
    <property type="match status" value="1"/>
</dbReference>
<dbReference type="InterPro" id="IPR000836">
    <property type="entry name" value="PRibTrfase_dom"/>
</dbReference>
<dbReference type="InterPro" id="IPR029057">
    <property type="entry name" value="PRTase-like"/>
</dbReference>
<dbReference type="InterPro" id="IPR034332">
    <property type="entry name" value="Upp_B"/>
</dbReference>
<dbReference type="InterPro" id="IPR050054">
    <property type="entry name" value="UPRTase/APRTase"/>
</dbReference>
<dbReference type="InterPro" id="IPR005765">
    <property type="entry name" value="Ura_phspho_trans"/>
</dbReference>
<dbReference type="NCBIfam" id="NF001097">
    <property type="entry name" value="PRK00129.1"/>
    <property type="match status" value="1"/>
</dbReference>
<dbReference type="NCBIfam" id="TIGR01091">
    <property type="entry name" value="upp"/>
    <property type="match status" value="1"/>
</dbReference>
<dbReference type="PANTHER" id="PTHR32315">
    <property type="entry name" value="ADENINE PHOSPHORIBOSYLTRANSFERASE"/>
    <property type="match status" value="1"/>
</dbReference>
<dbReference type="PANTHER" id="PTHR32315:SF4">
    <property type="entry name" value="URACIL PHOSPHORIBOSYLTRANSFERASE, CHLOROPLASTIC"/>
    <property type="match status" value="1"/>
</dbReference>
<dbReference type="Pfam" id="PF14681">
    <property type="entry name" value="UPRTase"/>
    <property type="match status" value="1"/>
</dbReference>
<dbReference type="SUPFAM" id="SSF53271">
    <property type="entry name" value="PRTase-like"/>
    <property type="match status" value="1"/>
</dbReference>
<gene>
    <name evidence="1" type="primary">upp</name>
    <name type="ordered locus">BH3764</name>
</gene>
<reference key="1">
    <citation type="journal article" date="2000" name="Nucleic Acids Res.">
        <title>Complete genome sequence of the alkaliphilic bacterium Bacillus halodurans and genomic sequence comparison with Bacillus subtilis.</title>
        <authorList>
            <person name="Takami H."/>
            <person name="Nakasone K."/>
            <person name="Takaki Y."/>
            <person name="Maeno G."/>
            <person name="Sasaki R."/>
            <person name="Masui N."/>
            <person name="Fuji F."/>
            <person name="Hirama C."/>
            <person name="Nakamura Y."/>
            <person name="Ogasawara N."/>
            <person name="Kuhara S."/>
            <person name="Horikoshi K."/>
        </authorList>
    </citation>
    <scope>NUCLEOTIDE SEQUENCE [LARGE SCALE GENOMIC DNA]</scope>
    <source>
        <strain>ATCC BAA-125 / DSM 18197 / FERM 7344 / JCM 9153 / C-125</strain>
    </source>
</reference>
<feature type="chain" id="PRO_0000120798" description="Uracil phosphoribosyltransferase">
    <location>
        <begin position="1"/>
        <end position="209"/>
    </location>
</feature>
<feature type="binding site" evidence="1">
    <location>
        <position position="79"/>
    </location>
    <ligand>
        <name>5-phospho-alpha-D-ribose 1-diphosphate</name>
        <dbReference type="ChEBI" id="CHEBI:58017"/>
    </ligand>
</feature>
<feature type="binding site" evidence="1">
    <location>
        <position position="104"/>
    </location>
    <ligand>
        <name>5-phospho-alpha-D-ribose 1-diphosphate</name>
        <dbReference type="ChEBI" id="CHEBI:58017"/>
    </ligand>
</feature>
<feature type="binding site" evidence="1">
    <location>
        <begin position="131"/>
        <end position="139"/>
    </location>
    <ligand>
        <name>5-phospho-alpha-D-ribose 1-diphosphate</name>
        <dbReference type="ChEBI" id="CHEBI:58017"/>
    </ligand>
</feature>
<feature type="binding site" evidence="1">
    <location>
        <position position="194"/>
    </location>
    <ligand>
        <name>uracil</name>
        <dbReference type="ChEBI" id="CHEBI:17568"/>
    </ligand>
</feature>
<feature type="binding site" evidence="1">
    <location>
        <begin position="199"/>
        <end position="201"/>
    </location>
    <ligand>
        <name>uracil</name>
        <dbReference type="ChEBI" id="CHEBI:17568"/>
    </ligand>
</feature>
<feature type="binding site" evidence="1">
    <location>
        <position position="200"/>
    </location>
    <ligand>
        <name>5-phospho-alpha-D-ribose 1-diphosphate</name>
        <dbReference type="ChEBI" id="CHEBI:58017"/>
    </ligand>
</feature>
<accession>Q9K6G5</accession>
<protein>
    <recommendedName>
        <fullName evidence="1">Uracil phosphoribosyltransferase</fullName>
        <ecNumber evidence="1">2.4.2.9</ecNumber>
    </recommendedName>
    <alternativeName>
        <fullName evidence="1">UMP pyrophosphorylase</fullName>
    </alternativeName>
    <alternativeName>
        <fullName evidence="1">UPRTase</fullName>
    </alternativeName>
</protein>
<proteinExistence type="inferred from homology"/>
<comment type="function">
    <text evidence="1">Catalyzes the conversion of uracil and 5-phospho-alpha-D-ribose 1-diphosphate (PRPP) to UMP and diphosphate.</text>
</comment>
<comment type="catalytic activity">
    <reaction evidence="1">
        <text>UMP + diphosphate = 5-phospho-alpha-D-ribose 1-diphosphate + uracil</text>
        <dbReference type="Rhea" id="RHEA:13017"/>
        <dbReference type="ChEBI" id="CHEBI:17568"/>
        <dbReference type="ChEBI" id="CHEBI:33019"/>
        <dbReference type="ChEBI" id="CHEBI:57865"/>
        <dbReference type="ChEBI" id="CHEBI:58017"/>
        <dbReference type="EC" id="2.4.2.9"/>
    </reaction>
</comment>
<comment type="cofactor">
    <cofactor evidence="1">
        <name>Mg(2+)</name>
        <dbReference type="ChEBI" id="CHEBI:18420"/>
    </cofactor>
    <text evidence="1">Binds 1 Mg(2+) ion per subunit. The magnesium is bound as Mg-PRPP.</text>
</comment>
<comment type="activity regulation">
    <text evidence="1">Allosterically activated by GTP.</text>
</comment>
<comment type="pathway">
    <text evidence="1">Pyrimidine metabolism; UMP biosynthesis via salvage pathway; UMP from uracil: step 1/1.</text>
</comment>
<comment type="similarity">
    <text evidence="1">Belongs to the UPRTase family.</text>
</comment>
<name>UPP_HALH5</name>
<keyword id="KW-0021">Allosteric enzyme</keyword>
<keyword id="KW-0328">Glycosyltransferase</keyword>
<keyword id="KW-0342">GTP-binding</keyword>
<keyword id="KW-0460">Magnesium</keyword>
<keyword id="KW-0547">Nucleotide-binding</keyword>
<keyword id="KW-1185">Reference proteome</keyword>
<keyword id="KW-0808">Transferase</keyword>
<sequence length="209" mass="22779">MSKVYVFDHPLIQHKLTYIRDKSTGTKEFRELVDEVAALMAFEITRDLPLQEVTVETPVGPATSKKIAGKKLGLVPILRAGLGMVDGILRMIPAAKVGHVGLYRDPETLQPVEYYVKLPTDVEERELIVIDPMLATGGSAVEAINCLKKRGATSIKLMCLIAAPEGVEVVKEAHPDVDIYLAALDEKLNEKGYIVPGLGDAGDRLFGTK</sequence>
<organism>
    <name type="scientific">Halalkalibacterium halodurans (strain ATCC BAA-125 / DSM 18197 / FERM 7344 / JCM 9153 / C-125)</name>
    <name type="common">Bacillus halodurans</name>
    <dbReference type="NCBI Taxonomy" id="272558"/>
    <lineage>
        <taxon>Bacteria</taxon>
        <taxon>Bacillati</taxon>
        <taxon>Bacillota</taxon>
        <taxon>Bacilli</taxon>
        <taxon>Bacillales</taxon>
        <taxon>Bacillaceae</taxon>
        <taxon>Halalkalibacterium (ex Joshi et al. 2022)</taxon>
    </lineage>
</organism>
<evidence type="ECO:0000255" key="1">
    <source>
        <dbReference type="HAMAP-Rule" id="MF_01218"/>
    </source>
</evidence>